<keyword id="KW-0067">ATP-binding</keyword>
<keyword id="KW-0106">Calcium</keyword>
<keyword id="KW-0175">Coiled coil</keyword>
<keyword id="KW-0418">Kinase</keyword>
<keyword id="KW-0479">Metal-binding</keyword>
<keyword id="KW-0547">Nucleotide-binding</keyword>
<keyword id="KW-0597">Phosphoprotein</keyword>
<keyword id="KW-0677">Repeat</keyword>
<keyword id="KW-0723">Serine/threonine-protein kinase</keyword>
<keyword id="KW-0808">Transferase</keyword>
<keyword id="KW-0862">Zinc</keyword>
<keyword id="KW-0863">Zinc-finger</keyword>
<organism>
    <name type="scientific">Candida albicans</name>
    <name type="common">Yeast</name>
    <dbReference type="NCBI Taxonomy" id="5476"/>
    <lineage>
        <taxon>Eukaryota</taxon>
        <taxon>Fungi</taxon>
        <taxon>Dikarya</taxon>
        <taxon>Ascomycota</taxon>
        <taxon>Saccharomycotina</taxon>
        <taxon>Pichiomycetes</taxon>
        <taxon>Debaryomycetaceae</taxon>
        <taxon>Candida/Lodderomyces clade</taxon>
        <taxon>Candida</taxon>
    </lineage>
</organism>
<comment type="function">
    <text>Necessary for osmotic stability.</text>
</comment>
<comment type="catalytic activity">
    <reaction>
        <text>L-seryl-[protein] + ATP = O-phospho-L-seryl-[protein] + ADP + H(+)</text>
        <dbReference type="Rhea" id="RHEA:17989"/>
        <dbReference type="Rhea" id="RHEA-COMP:9863"/>
        <dbReference type="Rhea" id="RHEA-COMP:11604"/>
        <dbReference type="ChEBI" id="CHEBI:15378"/>
        <dbReference type="ChEBI" id="CHEBI:29999"/>
        <dbReference type="ChEBI" id="CHEBI:30616"/>
        <dbReference type="ChEBI" id="CHEBI:83421"/>
        <dbReference type="ChEBI" id="CHEBI:456216"/>
        <dbReference type="EC" id="2.7.11.13"/>
    </reaction>
</comment>
<comment type="catalytic activity">
    <reaction>
        <text>L-threonyl-[protein] + ATP = O-phospho-L-threonyl-[protein] + ADP + H(+)</text>
        <dbReference type="Rhea" id="RHEA:46608"/>
        <dbReference type="Rhea" id="RHEA-COMP:11060"/>
        <dbReference type="Rhea" id="RHEA-COMP:11605"/>
        <dbReference type="ChEBI" id="CHEBI:15378"/>
        <dbReference type="ChEBI" id="CHEBI:30013"/>
        <dbReference type="ChEBI" id="CHEBI:30616"/>
        <dbReference type="ChEBI" id="CHEBI:61977"/>
        <dbReference type="ChEBI" id="CHEBI:456216"/>
        <dbReference type="EC" id="2.7.11.13"/>
    </reaction>
</comment>
<comment type="similarity">
    <text evidence="8">Belongs to the protein kinase superfamily. AGC Ser/Thr protein kinase family. PKC subfamily.</text>
</comment>
<evidence type="ECO:0000255" key="1">
    <source>
        <dbReference type="PROSITE-ProRule" id="PRU00041"/>
    </source>
</evidence>
<evidence type="ECO:0000255" key="2">
    <source>
        <dbReference type="PROSITE-ProRule" id="PRU00159"/>
    </source>
</evidence>
<evidence type="ECO:0000255" key="3">
    <source>
        <dbReference type="PROSITE-ProRule" id="PRU00226"/>
    </source>
</evidence>
<evidence type="ECO:0000255" key="4">
    <source>
        <dbReference type="PROSITE-ProRule" id="PRU00618"/>
    </source>
</evidence>
<evidence type="ECO:0000255" key="5">
    <source>
        <dbReference type="PROSITE-ProRule" id="PRU01207"/>
    </source>
</evidence>
<evidence type="ECO:0000255" key="6">
    <source>
        <dbReference type="PROSITE-ProRule" id="PRU10027"/>
    </source>
</evidence>
<evidence type="ECO:0000256" key="7">
    <source>
        <dbReference type="SAM" id="MobiDB-lite"/>
    </source>
</evidence>
<evidence type="ECO:0000305" key="8"/>
<name>KPC1_CANAX</name>
<sequence length="1097" mass="125312">MSTSQPSQQQNPEQVVNDIRQKIEKERKIIQGFNDVKRNTNNPEVIQKWKSKIIESQSMIDYYQETMNKLTRQMQRLNTNSSSRTASRSSVISEYKPSYSNFDLIKYECPSLGNKIQFMLQYLEFKLQVENKYSEANKKLSHLYLMDGDKSSSNAAEGGRAESDQRIQLLEKALKKYQKFSINDHEFDRDYEIMDSTKHSRKLLTGRLTVSITCIRDVDHIATALAKKRETVVVIKVDDLEKARTKPSKNDNWNEEMVIDVDKSHEIELAVMDKQNGIYVPVAVNWFSLFDLAEEIRKKKVAKDQGSSGWLPAANLPQTGGSGAGTGSSMTGGASYGATSPLPAHNDLRPSVSPSSDAKENKVSVSTWLSLEPGGQMLINLNFEKSITNGKQFRGPLGRHGAIRQKKEEVFEKHGHQFVQKQFYNIMSCALCGEFLRYTGYQCQDCKFLCHKKCYQKVVTKCISKSGSDYDAAQLNHRIPHRFEPITNHGTKWCCHCGYILPWGKKNVRKCTECGVMCHAQCTHLVPDFCGMSLQMANEILATIESTKVSPKKAQHQQSHAKPLPPKPPIESKPSMDSEETLHNEPSYKSLRPASVVHQDTNFVSKLPTTVQNKYQEPVELPPQQQNQVVPSTRRRGHGSTDLSFETGYGQQQHQHHRDVPQIVVEDHQHYNSNDNRDVEMEESKDEFDNFDYNNKYTENEILTDVQQDQVRSPFADQIQGVPETSHAKQQNQQVQQVQQQEELGHQRTHSSGKSGKSKRRKRKVGLDDFQFLAVLGKGNFGKVMLAESRHTSKLCAIKVLKKDFIVENDEAESVKSEKRVFLTANKEMHPFLLNLHCCFQTENRIYFVMEYISGGDLMWHIQKNRFTAKRAKFYACEVLLGLKYFHDNGIVYRDLKLDNILLTTKGHIKIGDYGLCKEDMWHKSTTSTFCGTPEFMAPEIVAGKAYDRSVDWWAFGVLLFQMLLCQSPFKGDDEDDIFNAIENDEVKYPINLSRQTVLVLQALLTKDPSQRLGSGPKDAEEIMEHPYFHDVNFDDVLNCRIPAPYIPEVQSEHDYSNFDKEFTSETPRLTPVETVLTSEMQEQFRGFSHISDNATI</sequence>
<protein>
    <recommendedName>
        <fullName>Protein kinase C-like 1</fullName>
        <shortName>PKC 1</shortName>
        <ecNumber>2.7.11.13</ecNumber>
    </recommendedName>
</protein>
<reference key="1">
    <citation type="journal article" date="1996" name="Yeast">
        <title>The Candida albicans PKC1 gene encodes a protein kinase C homolog necessary for cellular integrity but not dimorphism.</title>
        <authorList>
            <person name="Paravicini G."/>
            <person name="Mendoza A."/>
            <person name="Antonsson B."/>
            <person name="Cooper M."/>
            <person name="Losberger C."/>
            <person name="Payton M.A."/>
        </authorList>
    </citation>
    <scope>NUCLEOTIDE SEQUENCE [GENOMIC DNA]</scope>
    <source>
        <strain>ATCC 10261 / CBS 2718 / NBRC 1061 / FMJ 1011</strain>
    </source>
</reference>
<dbReference type="EC" id="2.7.11.13"/>
<dbReference type="EMBL" id="X81142">
    <property type="protein sequence ID" value="CAA57048.1"/>
    <property type="molecule type" value="Genomic_DNA"/>
</dbReference>
<dbReference type="PIR" id="S47220">
    <property type="entry name" value="S47220"/>
</dbReference>
<dbReference type="SMR" id="P43057"/>
<dbReference type="BindingDB" id="P43057"/>
<dbReference type="ChEMBL" id="CHEMBL5515"/>
<dbReference type="VEuPathDB" id="FungiDB:C3_04470W_A"/>
<dbReference type="VEuPathDB" id="FungiDB:CAWG_02760"/>
<dbReference type="BRENDA" id="2.7.11.13">
    <property type="organism ID" value="1096"/>
</dbReference>
<dbReference type="GO" id="GO:0010494">
    <property type="term" value="C:cytoplasmic stress granule"/>
    <property type="evidence" value="ECO:0007669"/>
    <property type="project" value="EnsemblFungi"/>
</dbReference>
<dbReference type="GO" id="GO:0005856">
    <property type="term" value="C:cytoskeleton"/>
    <property type="evidence" value="ECO:0007669"/>
    <property type="project" value="EnsemblFungi"/>
</dbReference>
<dbReference type="GO" id="GO:0005634">
    <property type="term" value="C:nucleus"/>
    <property type="evidence" value="ECO:0007669"/>
    <property type="project" value="EnsemblFungi"/>
</dbReference>
<dbReference type="GO" id="GO:0030427">
    <property type="term" value="C:site of polarized growth"/>
    <property type="evidence" value="ECO:0007669"/>
    <property type="project" value="EnsemblFungi"/>
</dbReference>
<dbReference type="GO" id="GO:0005524">
    <property type="term" value="F:ATP binding"/>
    <property type="evidence" value="ECO:0007669"/>
    <property type="project" value="UniProtKB-KW"/>
</dbReference>
<dbReference type="GO" id="GO:0004697">
    <property type="term" value="F:diacylglycerol-dependent serine/threonine kinase activity"/>
    <property type="evidence" value="ECO:0007669"/>
    <property type="project" value="UniProtKB-EC"/>
</dbReference>
<dbReference type="GO" id="GO:0106310">
    <property type="term" value="F:protein serine kinase activity"/>
    <property type="evidence" value="ECO:0007669"/>
    <property type="project" value="RHEA"/>
</dbReference>
<dbReference type="GO" id="GO:0008270">
    <property type="term" value="F:zinc ion binding"/>
    <property type="evidence" value="ECO:0007669"/>
    <property type="project" value="UniProtKB-KW"/>
</dbReference>
<dbReference type="GO" id="GO:0032186">
    <property type="term" value="P:cellular bud neck septin ring organization"/>
    <property type="evidence" value="ECO:0007669"/>
    <property type="project" value="EnsemblFungi"/>
</dbReference>
<dbReference type="GO" id="GO:0009267">
    <property type="term" value="P:cellular response to starvation"/>
    <property type="evidence" value="ECO:0007669"/>
    <property type="project" value="EnsemblFungi"/>
</dbReference>
<dbReference type="GO" id="GO:0030447">
    <property type="term" value="P:filamentous growth"/>
    <property type="evidence" value="ECO:0007669"/>
    <property type="project" value="UniProtKB-ARBA"/>
</dbReference>
<dbReference type="GO" id="GO:0009272">
    <property type="term" value="P:fungal-type cell wall biogenesis"/>
    <property type="evidence" value="ECO:0007669"/>
    <property type="project" value="InterPro"/>
</dbReference>
<dbReference type="GO" id="GO:0035556">
    <property type="term" value="P:intracellular signal transduction"/>
    <property type="evidence" value="ECO:0007669"/>
    <property type="project" value="EnsemblFungi"/>
</dbReference>
<dbReference type="GO" id="GO:0000425">
    <property type="term" value="P:pexophagy"/>
    <property type="evidence" value="ECO:0007669"/>
    <property type="project" value="EnsemblFungi"/>
</dbReference>
<dbReference type="GO" id="GO:0010606">
    <property type="term" value="P:positive regulation of cytoplasmic mRNA processing body assembly"/>
    <property type="evidence" value="ECO:0007669"/>
    <property type="project" value="EnsemblFungi"/>
</dbReference>
<dbReference type="GO" id="GO:0060237">
    <property type="term" value="P:regulation of fungal-type cell wall organization"/>
    <property type="evidence" value="ECO:0007669"/>
    <property type="project" value="EnsemblFungi"/>
</dbReference>
<dbReference type="GO" id="GO:0060211">
    <property type="term" value="P:regulation of nuclear-transcribed mRNA poly(A) tail shortening"/>
    <property type="evidence" value="ECO:0007669"/>
    <property type="project" value="EnsemblFungi"/>
</dbReference>
<dbReference type="GO" id="GO:0034063">
    <property type="term" value="P:stress granule assembly"/>
    <property type="evidence" value="ECO:0007669"/>
    <property type="project" value="EnsemblFungi"/>
</dbReference>
<dbReference type="CDD" id="cd20822">
    <property type="entry name" value="C1_ScPKC1-like_rpt1"/>
    <property type="match status" value="1"/>
</dbReference>
<dbReference type="CDD" id="cd20823">
    <property type="entry name" value="C1_ScPKC1-like_rpt2"/>
    <property type="match status" value="1"/>
</dbReference>
<dbReference type="CDD" id="cd08689">
    <property type="entry name" value="C2_fungal_Pkc1p"/>
    <property type="match status" value="1"/>
</dbReference>
<dbReference type="CDD" id="cd11621">
    <property type="entry name" value="HR1_PKC-like_1_fungi"/>
    <property type="match status" value="1"/>
</dbReference>
<dbReference type="CDD" id="cd11620">
    <property type="entry name" value="HR1_PKC-like_2_fungi"/>
    <property type="match status" value="1"/>
</dbReference>
<dbReference type="CDD" id="cd05570">
    <property type="entry name" value="STKc_PKC"/>
    <property type="match status" value="1"/>
</dbReference>
<dbReference type="FunFam" id="1.10.510.10:FF:000101">
    <property type="entry name" value="Protein kinase C"/>
    <property type="match status" value="1"/>
</dbReference>
<dbReference type="FunFam" id="3.30.60.20:FF:000014">
    <property type="entry name" value="Protein kinase C"/>
    <property type="match status" value="1"/>
</dbReference>
<dbReference type="FunFam" id="3.30.60.20:FF:000034">
    <property type="entry name" value="Protein kinase C"/>
    <property type="match status" value="1"/>
</dbReference>
<dbReference type="FunFam" id="3.30.200.20:FF:000474">
    <property type="entry name" value="Serine/threonine-protein kinase N2-like"/>
    <property type="match status" value="1"/>
</dbReference>
<dbReference type="Gene3D" id="3.30.60.20">
    <property type="match status" value="2"/>
</dbReference>
<dbReference type="Gene3D" id="3.30.200.20">
    <property type="entry name" value="Phosphorylase Kinase, domain 1"/>
    <property type="match status" value="1"/>
</dbReference>
<dbReference type="Gene3D" id="1.10.510.10">
    <property type="entry name" value="Transferase(Phosphotransferase) domain 1"/>
    <property type="match status" value="1"/>
</dbReference>
<dbReference type="InterPro" id="IPR000961">
    <property type="entry name" value="AGC-kinase_C"/>
</dbReference>
<dbReference type="InterPro" id="IPR046349">
    <property type="entry name" value="C1-like_sf"/>
</dbReference>
<dbReference type="InterPro" id="IPR000008">
    <property type="entry name" value="C2_dom"/>
</dbReference>
<dbReference type="InterPro" id="IPR035892">
    <property type="entry name" value="C2_domain_sf"/>
</dbReference>
<dbReference type="InterPro" id="IPR037778">
    <property type="entry name" value="C2_fungal_PKC"/>
</dbReference>
<dbReference type="InterPro" id="IPR011072">
    <property type="entry name" value="HR1_rho-bd"/>
</dbReference>
<dbReference type="InterPro" id="IPR036274">
    <property type="entry name" value="HR1_rpt_sf"/>
</dbReference>
<dbReference type="InterPro" id="IPR011009">
    <property type="entry name" value="Kinase-like_dom_sf"/>
</dbReference>
<dbReference type="InterPro" id="IPR002219">
    <property type="entry name" value="PE/DAG-bd"/>
</dbReference>
<dbReference type="InterPro" id="IPR037312">
    <property type="entry name" value="PKC-like_HR1"/>
</dbReference>
<dbReference type="InterPro" id="IPR017892">
    <property type="entry name" value="Pkinase_C"/>
</dbReference>
<dbReference type="InterPro" id="IPR000719">
    <property type="entry name" value="Prot_kinase_dom"/>
</dbReference>
<dbReference type="InterPro" id="IPR017441">
    <property type="entry name" value="Protein_kinase_ATP_BS"/>
</dbReference>
<dbReference type="InterPro" id="IPR008271">
    <property type="entry name" value="Ser/Thr_kinase_AS"/>
</dbReference>
<dbReference type="PANTHER" id="PTHR24351">
    <property type="entry name" value="RIBOSOMAL PROTEIN S6 KINASE"/>
    <property type="match status" value="1"/>
</dbReference>
<dbReference type="Pfam" id="PF00130">
    <property type="entry name" value="C1_1"/>
    <property type="match status" value="2"/>
</dbReference>
<dbReference type="Pfam" id="PF00168">
    <property type="entry name" value="C2"/>
    <property type="match status" value="1"/>
</dbReference>
<dbReference type="Pfam" id="PF02185">
    <property type="entry name" value="HR1"/>
    <property type="match status" value="2"/>
</dbReference>
<dbReference type="Pfam" id="PF00069">
    <property type="entry name" value="Pkinase"/>
    <property type="match status" value="1"/>
</dbReference>
<dbReference type="Pfam" id="PF00433">
    <property type="entry name" value="Pkinase_C"/>
    <property type="match status" value="1"/>
</dbReference>
<dbReference type="SMART" id="SM00109">
    <property type="entry name" value="C1"/>
    <property type="match status" value="2"/>
</dbReference>
<dbReference type="SMART" id="SM00239">
    <property type="entry name" value="C2"/>
    <property type="match status" value="1"/>
</dbReference>
<dbReference type="SMART" id="SM00742">
    <property type="entry name" value="Hr1"/>
    <property type="match status" value="2"/>
</dbReference>
<dbReference type="SMART" id="SM00133">
    <property type="entry name" value="S_TK_X"/>
    <property type="match status" value="1"/>
</dbReference>
<dbReference type="SMART" id="SM00220">
    <property type="entry name" value="S_TKc"/>
    <property type="match status" value="1"/>
</dbReference>
<dbReference type="SUPFAM" id="SSF49562">
    <property type="entry name" value="C2 domain (Calcium/lipid-binding domain, CaLB)"/>
    <property type="match status" value="1"/>
</dbReference>
<dbReference type="SUPFAM" id="SSF57889">
    <property type="entry name" value="Cysteine-rich domain"/>
    <property type="match status" value="2"/>
</dbReference>
<dbReference type="SUPFAM" id="SSF46585">
    <property type="entry name" value="HR1 repeat"/>
    <property type="match status" value="1"/>
</dbReference>
<dbReference type="SUPFAM" id="SSF56112">
    <property type="entry name" value="Protein kinase-like (PK-like)"/>
    <property type="match status" value="1"/>
</dbReference>
<dbReference type="PROSITE" id="PS51285">
    <property type="entry name" value="AGC_KINASE_CTER"/>
    <property type="match status" value="1"/>
</dbReference>
<dbReference type="PROSITE" id="PS50004">
    <property type="entry name" value="C2"/>
    <property type="match status" value="1"/>
</dbReference>
<dbReference type="PROSITE" id="PS00107">
    <property type="entry name" value="PROTEIN_KINASE_ATP"/>
    <property type="match status" value="1"/>
</dbReference>
<dbReference type="PROSITE" id="PS50011">
    <property type="entry name" value="PROTEIN_KINASE_DOM"/>
    <property type="match status" value="1"/>
</dbReference>
<dbReference type="PROSITE" id="PS00108">
    <property type="entry name" value="PROTEIN_KINASE_ST"/>
    <property type="match status" value="1"/>
</dbReference>
<dbReference type="PROSITE" id="PS51860">
    <property type="entry name" value="REM_1"/>
    <property type="match status" value="2"/>
</dbReference>
<dbReference type="PROSITE" id="PS00479">
    <property type="entry name" value="ZF_DAG_PE_1"/>
    <property type="match status" value="2"/>
</dbReference>
<dbReference type="PROSITE" id="PS50081">
    <property type="entry name" value="ZF_DAG_PE_2"/>
    <property type="match status" value="2"/>
</dbReference>
<feature type="chain" id="PRO_0000055739" description="Protein kinase C-like 1">
    <location>
        <begin position="1"/>
        <end position="1097"/>
    </location>
</feature>
<feature type="domain" description="REM-1 1" evidence="5">
    <location>
        <begin position="2"/>
        <end position="76"/>
    </location>
</feature>
<feature type="domain" description="REM-1 2" evidence="5">
    <location>
        <begin position="106"/>
        <end position="183"/>
    </location>
</feature>
<feature type="domain" description="C2" evidence="1">
    <location>
        <begin position="189"/>
        <end position="311"/>
    </location>
</feature>
<feature type="domain" description="Protein kinase" evidence="2">
    <location>
        <begin position="770"/>
        <end position="1029"/>
    </location>
</feature>
<feature type="domain" description="AGC-kinase C-terminal" evidence="4">
    <location>
        <begin position="1030"/>
        <end position="1097"/>
    </location>
</feature>
<feature type="zinc finger region" description="Phorbol-ester/DAG-type 1" evidence="3">
    <location>
        <begin position="415"/>
        <end position="462"/>
    </location>
</feature>
<feature type="zinc finger region" description="Phorbol-ester/DAG-type 2" evidence="3">
    <location>
        <begin position="480"/>
        <end position="530"/>
    </location>
</feature>
<feature type="region of interest" description="Disordered" evidence="7">
    <location>
        <begin position="304"/>
        <end position="359"/>
    </location>
</feature>
<feature type="region of interest" description="Disordered" evidence="7">
    <location>
        <begin position="548"/>
        <end position="594"/>
    </location>
</feature>
<feature type="region of interest" description="Disordered" evidence="7">
    <location>
        <begin position="615"/>
        <end position="646"/>
    </location>
</feature>
<feature type="region of interest" description="Disordered" evidence="7">
    <location>
        <begin position="724"/>
        <end position="763"/>
    </location>
</feature>
<feature type="compositionally biased region" description="Low complexity" evidence="7">
    <location>
        <begin position="327"/>
        <end position="340"/>
    </location>
</feature>
<feature type="compositionally biased region" description="Basic and acidic residues" evidence="7">
    <location>
        <begin position="574"/>
        <end position="583"/>
    </location>
</feature>
<feature type="compositionally biased region" description="Low complexity" evidence="7">
    <location>
        <begin position="730"/>
        <end position="741"/>
    </location>
</feature>
<feature type="compositionally biased region" description="Basic residues" evidence="7">
    <location>
        <begin position="747"/>
        <end position="763"/>
    </location>
</feature>
<feature type="active site" description="Proton acceptor" evidence="2 6">
    <location>
        <position position="895"/>
    </location>
</feature>
<feature type="binding site" evidence="2">
    <location>
        <begin position="776"/>
        <end position="784"/>
    </location>
    <ligand>
        <name>ATP</name>
        <dbReference type="ChEBI" id="CHEBI:30616"/>
    </ligand>
</feature>
<feature type="binding site" evidence="2">
    <location>
        <position position="799"/>
    </location>
    <ligand>
        <name>ATP</name>
        <dbReference type="ChEBI" id="CHEBI:30616"/>
    </ligand>
</feature>
<proteinExistence type="inferred from homology"/>
<gene>
    <name type="primary">PKC1</name>
</gene>
<accession>P43057</accession>